<name>DCX_RAT</name>
<protein>
    <recommendedName>
        <fullName>Neuronal migration protein doublecortin</fullName>
    </recommendedName>
</protein>
<dbReference type="EMBL" id="AF155959">
    <property type="protein sequence ID" value="AAG18479.2"/>
    <property type="molecule type" value="mRNA"/>
</dbReference>
<dbReference type="BMRB" id="Q9ESI7"/>
<dbReference type="SMR" id="Q9ESI7"/>
<dbReference type="FunCoup" id="Q9ESI7">
    <property type="interactions" value="27"/>
</dbReference>
<dbReference type="IntAct" id="Q9ESI7">
    <property type="interactions" value="2"/>
</dbReference>
<dbReference type="MINT" id="Q9ESI7"/>
<dbReference type="STRING" id="10116.ENSRNOP00000065381"/>
<dbReference type="GlyGen" id="Q9ESI7">
    <property type="glycosylation" value="1 site"/>
</dbReference>
<dbReference type="iPTMnet" id="Q9ESI7"/>
<dbReference type="PhosphoSitePlus" id="Q9ESI7"/>
<dbReference type="PaxDb" id="10116-ENSRNOP00000065381"/>
<dbReference type="AGR" id="RGD:620670"/>
<dbReference type="RGD" id="620670">
    <property type="gene designation" value="Dcx"/>
</dbReference>
<dbReference type="eggNOG" id="KOG3757">
    <property type="taxonomic scope" value="Eukaryota"/>
</dbReference>
<dbReference type="InParanoid" id="Q9ESI7"/>
<dbReference type="PRO" id="PR:Q9ESI7"/>
<dbReference type="Proteomes" id="UP000002494">
    <property type="component" value="Unplaced"/>
</dbReference>
<dbReference type="GO" id="GO:0030424">
    <property type="term" value="C:axon"/>
    <property type="evidence" value="ECO:0000314"/>
    <property type="project" value="RGD"/>
</dbReference>
<dbReference type="GO" id="GO:0005737">
    <property type="term" value="C:cytoplasm"/>
    <property type="evidence" value="ECO:0000266"/>
    <property type="project" value="RGD"/>
</dbReference>
<dbReference type="GO" id="GO:0030425">
    <property type="term" value="C:dendrite"/>
    <property type="evidence" value="ECO:0000314"/>
    <property type="project" value="RGD"/>
</dbReference>
<dbReference type="GO" id="GO:0098982">
    <property type="term" value="C:GABA-ergic synapse"/>
    <property type="evidence" value="ECO:0000314"/>
    <property type="project" value="SynGO"/>
</dbReference>
<dbReference type="GO" id="GO:0098978">
    <property type="term" value="C:glutamatergic synapse"/>
    <property type="evidence" value="ECO:0000314"/>
    <property type="project" value="SynGO"/>
</dbReference>
<dbReference type="GO" id="GO:0030426">
    <property type="term" value="C:growth cone"/>
    <property type="evidence" value="ECO:0000314"/>
    <property type="project" value="RGD"/>
</dbReference>
<dbReference type="GO" id="GO:0005874">
    <property type="term" value="C:microtubule"/>
    <property type="evidence" value="ECO:0000314"/>
    <property type="project" value="RGD"/>
</dbReference>
<dbReference type="GO" id="GO:0043005">
    <property type="term" value="C:neuron projection"/>
    <property type="evidence" value="ECO:0000250"/>
    <property type="project" value="UniProtKB"/>
</dbReference>
<dbReference type="GO" id="GO:0043025">
    <property type="term" value="C:neuronal cell body"/>
    <property type="evidence" value="ECO:0000314"/>
    <property type="project" value="RGD"/>
</dbReference>
<dbReference type="GO" id="GO:0098793">
    <property type="term" value="C:presynapse"/>
    <property type="evidence" value="ECO:0000314"/>
    <property type="project" value="SynGO"/>
</dbReference>
<dbReference type="GO" id="GO:0008017">
    <property type="term" value="F:microtubule binding"/>
    <property type="evidence" value="ECO:0000250"/>
    <property type="project" value="UniProtKB"/>
</dbReference>
<dbReference type="GO" id="GO:0019901">
    <property type="term" value="F:protein kinase binding"/>
    <property type="evidence" value="ECO:0000266"/>
    <property type="project" value="RGD"/>
</dbReference>
<dbReference type="GO" id="GO:0048675">
    <property type="term" value="P:axon extension"/>
    <property type="evidence" value="ECO:0000266"/>
    <property type="project" value="RGD"/>
</dbReference>
<dbReference type="GO" id="GO:0035082">
    <property type="term" value="P:axoneme assembly"/>
    <property type="evidence" value="ECO:0007669"/>
    <property type="project" value="InterPro"/>
</dbReference>
<dbReference type="GO" id="GO:0007420">
    <property type="term" value="P:brain development"/>
    <property type="evidence" value="ECO:0000266"/>
    <property type="project" value="RGD"/>
</dbReference>
<dbReference type="GO" id="GO:0021952">
    <property type="term" value="P:central nervous system projection neuron axonogenesis"/>
    <property type="evidence" value="ECO:0000266"/>
    <property type="project" value="RGD"/>
</dbReference>
<dbReference type="GO" id="GO:0048813">
    <property type="term" value="P:dendrite morphogenesis"/>
    <property type="evidence" value="ECO:0000266"/>
    <property type="project" value="RGD"/>
</dbReference>
<dbReference type="GO" id="GO:0021766">
    <property type="term" value="P:hippocampus development"/>
    <property type="evidence" value="ECO:0000266"/>
    <property type="project" value="RGD"/>
</dbReference>
<dbReference type="GO" id="GO:0035556">
    <property type="term" value="P:intracellular signal transduction"/>
    <property type="evidence" value="ECO:0007669"/>
    <property type="project" value="InterPro"/>
</dbReference>
<dbReference type="GO" id="GO:0021819">
    <property type="term" value="P:layer formation in cerebral cortex"/>
    <property type="evidence" value="ECO:0000266"/>
    <property type="project" value="RGD"/>
</dbReference>
<dbReference type="GO" id="GO:0001764">
    <property type="term" value="P:neuron migration"/>
    <property type="evidence" value="ECO:0000315"/>
    <property type="project" value="RGD"/>
</dbReference>
<dbReference type="GO" id="GO:0048672">
    <property type="term" value="P:positive regulation of collateral sprouting"/>
    <property type="evidence" value="ECO:0000315"/>
    <property type="project" value="RGD"/>
</dbReference>
<dbReference type="GO" id="GO:0045807">
    <property type="term" value="P:positive regulation of endocytosis"/>
    <property type="evidence" value="ECO:0000315"/>
    <property type="project" value="RGD"/>
</dbReference>
<dbReference type="GO" id="GO:0021860">
    <property type="term" value="P:pyramidal neuron development"/>
    <property type="evidence" value="ECO:0000266"/>
    <property type="project" value="RGD"/>
</dbReference>
<dbReference type="GO" id="GO:0150052">
    <property type="term" value="P:regulation of postsynapse assembly"/>
    <property type="evidence" value="ECO:0000266"/>
    <property type="project" value="RGD"/>
</dbReference>
<dbReference type="GO" id="GO:0051602">
    <property type="term" value="P:response to electrical stimulus"/>
    <property type="evidence" value="ECO:0000270"/>
    <property type="project" value="RGD"/>
</dbReference>
<dbReference type="GO" id="GO:0060041">
    <property type="term" value="P:retina development in camera-type eye"/>
    <property type="evidence" value="ECO:0007669"/>
    <property type="project" value="InterPro"/>
</dbReference>
<dbReference type="GO" id="GO:0021510">
    <property type="term" value="P:spinal cord development"/>
    <property type="evidence" value="ECO:0000270"/>
    <property type="project" value="RGD"/>
</dbReference>
<dbReference type="CDD" id="cd16112">
    <property type="entry name" value="DCX1_DCX"/>
    <property type="match status" value="1"/>
</dbReference>
<dbReference type="CDD" id="cd17069">
    <property type="entry name" value="DCX2"/>
    <property type="match status" value="1"/>
</dbReference>
<dbReference type="FunFam" id="3.10.20.230:FF:000003">
    <property type="entry name" value="Neuronal migration protein doublecortin"/>
    <property type="match status" value="1"/>
</dbReference>
<dbReference type="FunFam" id="3.10.20.230:FF:000001">
    <property type="entry name" value="serine/threonine-protein kinase DCLK1 isoform X1"/>
    <property type="match status" value="1"/>
</dbReference>
<dbReference type="Gene3D" id="3.10.20.230">
    <property type="entry name" value="Doublecortin domain"/>
    <property type="match status" value="2"/>
</dbReference>
<dbReference type="InterPro" id="IPR017302">
    <property type="entry name" value="DCX_chordates"/>
</dbReference>
<dbReference type="InterPro" id="IPR003533">
    <property type="entry name" value="Doublecortin_dom"/>
</dbReference>
<dbReference type="InterPro" id="IPR036572">
    <property type="entry name" value="Doublecortin_dom_sf"/>
</dbReference>
<dbReference type="PANTHER" id="PTHR23005:SF4">
    <property type="entry name" value="OXYGEN-REGULATED PROTEIN 1"/>
    <property type="match status" value="1"/>
</dbReference>
<dbReference type="PANTHER" id="PTHR23005">
    <property type="entry name" value="RETINITIS PIGMENTOSA 1 PROTEIN"/>
    <property type="match status" value="1"/>
</dbReference>
<dbReference type="Pfam" id="PF03607">
    <property type="entry name" value="DCX"/>
    <property type="match status" value="2"/>
</dbReference>
<dbReference type="PIRSF" id="PIRSF037870">
    <property type="entry name" value="Doublin"/>
    <property type="match status" value="1"/>
</dbReference>
<dbReference type="SMART" id="SM00537">
    <property type="entry name" value="DCX"/>
    <property type="match status" value="2"/>
</dbReference>
<dbReference type="SUPFAM" id="SSF89837">
    <property type="entry name" value="Doublecortin (DC)"/>
    <property type="match status" value="2"/>
</dbReference>
<dbReference type="PROSITE" id="PS50309">
    <property type="entry name" value="DC"/>
    <property type="match status" value="2"/>
</dbReference>
<accession>Q9ESI7</accession>
<reference key="1">
    <citation type="submission" date="2002-12" db="EMBL/GenBank/DDBJ databases">
        <title>Characterization of gene related with neuronal migration.</title>
        <authorList>
            <person name="Park S."/>
            <person name="Kim H."/>
            <person name="Kang Y."/>
            <person name="Chang Y."/>
        </authorList>
    </citation>
    <scope>NUCLEOTIDE SEQUENCE [MRNA]</scope>
    <source>
        <strain>Sprague-Dawley</strain>
    </source>
</reference>
<reference key="2">
    <citation type="journal article" date="2004" name="Neuron">
        <title>Doublecortin microtubule affinity is regulated by a balance of kinase and phosphatase activity at the leading edge of migrating neurons.</title>
        <authorList>
            <person name="Schaar B.T."/>
            <person name="Kinoshita K."/>
            <person name="McConnell S.K."/>
        </authorList>
    </citation>
    <scope>FUNCTION</scope>
    <scope>SUBCELLULAR LOCATION</scope>
    <scope>PHOSPHORYLATION AT SER-47 AND SER-115</scope>
    <scope>MUTAGENESIS OF SER-47 AND SER-115</scope>
</reference>
<reference key="3">
    <citation type="journal article" date="2012" name="Nat. Commun.">
        <title>Quantitative maps of protein phosphorylation sites across 14 different rat organs and tissues.</title>
        <authorList>
            <person name="Lundby A."/>
            <person name="Secher A."/>
            <person name="Lage K."/>
            <person name="Nordsborg N.B."/>
            <person name="Dmytriyev A."/>
            <person name="Lundby C."/>
            <person name="Olsen J.V."/>
        </authorList>
    </citation>
    <scope>IDENTIFICATION BY MASS SPECTROMETRY [LARGE SCALE ANALYSIS]</scope>
</reference>
<proteinExistence type="evidence at protein level"/>
<gene>
    <name type="primary">Dcx</name>
</gene>
<organism>
    <name type="scientific">Rattus norvegicus</name>
    <name type="common">Rat</name>
    <dbReference type="NCBI Taxonomy" id="10116"/>
    <lineage>
        <taxon>Eukaryota</taxon>
        <taxon>Metazoa</taxon>
        <taxon>Chordata</taxon>
        <taxon>Craniata</taxon>
        <taxon>Vertebrata</taxon>
        <taxon>Euteleostomi</taxon>
        <taxon>Mammalia</taxon>
        <taxon>Eutheria</taxon>
        <taxon>Euarchontoglires</taxon>
        <taxon>Glires</taxon>
        <taxon>Rodentia</taxon>
        <taxon>Myomorpha</taxon>
        <taxon>Muroidea</taxon>
        <taxon>Muridae</taxon>
        <taxon>Murinae</taxon>
        <taxon>Rattus</taxon>
    </lineage>
</organism>
<sequence>MELDFGHFDERDKASRNMRGSRMNGLPSPTHSAHCSFYRTRTLQALSNEKKAKKVRFYRNGDRYFKGIVYAVSSDRFRSFDALLADLTRSLSDNINLLQGVRYIYTIDGSRKIGSMDELEEGESYVCSSDNFFKKVEYTKNVNPNWSVNVKTSANMKAPQSLASSNSAQARENKDFVRPKLVTIIRSGVKPRKAVRVLLNKKTAHSFEQVLTDITEAIKLETGVVKKLYTLDGKQVTCLHDFFGDDDVFIACGPEKFRYAQDDFSLDENECRVMKGNPSATAGPKASPTPQKTSAKSPGPMRRSKSPADSGNDQDANGTSSSQLSTPKSKQSPISTPTSPGSLRKHKDLYLPLSLDDSDSLGDSM</sequence>
<evidence type="ECO:0000250" key="1"/>
<evidence type="ECO:0000250" key="2">
    <source>
        <dbReference type="UniProtKB" id="O43602"/>
    </source>
</evidence>
<evidence type="ECO:0000250" key="3">
    <source>
        <dbReference type="UniProtKB" id="O88809"/>
    </source>
</evidence>
<evidence type="ECO:0000255" key="4"/>
<evidence type="ECO:0000255" key="5">
    <source>
        <dbReference type="PROSITE-ProRule" id="PRU00072"/>
    </source>
</evidence>
<evidence type="ECO:0000256" key="6">
    <source>
        <dbReference type="SAM" id="MobiDB-lite"/>
    </source>
</evidence>
<evidence type="ECO:0000269" key="7">
    <source>
    </source>
</evidence>
<evidence type="ECO:0000305" key="8"/>
<feature type="chain" id="PRO_0000079835" description="Neuronal migration protein doublecortin">
    <location>
        <begin position="1"/>
        <end position="365"/>
    </location>
</feature>
<feature type="domain" description="Doublecortin 1" evidence="5">
    <location>
        <begin position="53"/>
        <end position="139"/>
    </location>
</feature>
<feature type="domain" description="Doublecortin 2" evidence="5">
    <location>
        <begin position="180"/>
        <end position="263"/>
    </location>
</feature>
<feature type="region of interest" description="Disordered" evidence="6">
    <location>
        <begin position="275"/>
        <end position="365"/>
    </location>
</feature>
<feature type="compositionally biased region" description="Polar residues" evidence="6">
    <location>
        <begin position="307"/>
        <end position="341"/>
    </location>
</feature>
<feature type="compositionally biased region" description="Acidic residues" evidence="6">
    <location>
        <begin position="356"/>
        <end position="365"/>
    </location>
</feature>
<feature type="modified residue" description="Phosphoserine; by CDK5" evidence="3">
    <location>
        <position position="28"/>
    </location>
</feature>
<feature type="modified residue" description="Phosphoserine; by MARK1 and PKA" evidence="7">
    <location>
        <position position="47"/>
    </location>
</feature>
<feature type="modified residue" description="Phosphotyrosine; by ABL" evidence="4">
    <location>
        <position position="70"/>
    </location>
</feature>
<feature type="modified residue" description="Phosphoserine; by PKC" evidence="4">
    <location>
        <position position="74"/>
    </location>
</feature>
<feature type="modified residue" description="Phosphoserine; by CK2" evidence="4">
    <location>
        <position position="90"/>
    </location>
</feature>
<feature type="modified residue" description="Phosphoserine; by PKC" evidence="4">
    <location>
        <position position="110"/>
    </location>
</feature>
<feature type="modified residue" description="Phosphoserine; by CK2, MARK1 and PKA" evidence="7">
    <location>
        <position position="115"/>
    </location>
</feature>
<feature type="modified residue" description="Phosphoserine; by CK2" evidence="3">
    <location>
        <position position="265"/>
    </location>
</feature>
<feature type="modified residue" description="Phosphoserine; by CDK5" evidence="3">
    <location>
        <position position="287"/>
    </location>
</feature>
<feature type="modified residue" description="Phosphothreonine; by CDK5" evidence="3">
    <location>
        <position position="289"/>
    </location>
</feature>
<feature type="modified residue" description="Phosphoserine; by PKC" evidence="4">
    <location>
        <position position="294"/>
    </location>
</feature>
<feature type="modified residue" description="Phosphoserine; by CDK5" evidence="3">
    <location>
        <position position="297"/>
    </location>
</feature>
<feature type="modified residue" description="Phosphoserine; by CK2" evidence="2 4">
    <location>
        <position position="306"/>
    </location>
</feature>
<feature type="modified residue" description="Phosphoserine; by DYRK2" evidence="1">
    <location>
        <position position="306"/>
    </location>
</feature>
<feature type="modified residue" description="Phosphothreonine; by CDK5" evidence="3">
    <location>
        <position position="326"/>
    </location>
</feature>
<feature type="modified residue" description="Phosphothreonine; by PKC and MAPK" evidence="4">
    <location>
        <position position="326"/>
    </location>
</feature>
<feature type="modified residue" description="Phosphoserine; by CDK5" evidence="3">
    <location>
        <position position="332"/>
    </location>
</feature>
<feature type="modified residue" description="Phosphoserine; by MAPK" evidence="4">
    <location>
        <position position="332"/>
    </location>
</feature>
<feature type="modified residue" description="Phosphothreonine; by MAPK" evidence="4">
    <location>
        <position position="336"/>
    </location>
</feature>
<feature type="modified residue" description="Phosphoserine; by CDK5" evidence="3">
    <location>
        <position position="339"/>
    </location>
</feature>
<feature type="modified residue" description="Phosphoserine; by MAPK" evidence="4">
    <location>
        <position position="339"/>
    </location>
</feature>
<feature type="modified residue" description="Phosphoserine; by PKC" evidence="4">
    <location>
        <position position="342"/>
    </location>
</feature>
<feature type="modified residue" description="Phosphoserine; by CK2" evidence="4">
    <location>
        <position position="354"/>
    </location>
</feature>
<feature type="modified residue" description="Phosphoserine; by CK2" evidence="4">
    <location>
        <position position="360"/>
    </location>
</feature>
<feature type="mutagenesis site" description="Impairs phosphorylation by MARK1 and PKA; when associated with A-115." evidence="7">
    <original>S</original>
    <variation>A</variation>
    <location>
        <position position="47"/>
    </location>
</feature>
<feature type="mutagenesis site" description="Impairs phosphorylation by MARK1 and PKA; when associated with A-47." evidence="7">
    <original>S</original>
    <variation>A</variation>
    <location>
        <position position="115"/>
    </location>
</feature>
<comment type="function">
    <text evidence="7">Microtubule-associated protein required for initial steps of neuronal dispersion and cortex lamination during cerebral cortex development. May act by competing with the putative neuronal protein kinase DCLK1 in binding to a target protein. May in that way participate in a signaling pathway that is crucial for neuronal interaction before and during migration, possibly as part of a calcium ion-dependent signal transduction pathway. May participate along with PAFAH1B1/LIS-1 in a distinct overlapping signaling pathway that promotes neuronal migration.</text>
</comment>
<comment type="subunit">
    <text evidence="2">Interacts with tubulin. Interacts with USP9X.</text>
</comment>
<comment type="subcellular location">
    <subcellularLocation>
        <location evidence="8">Cytoplasm</location>
    </subcellularLocation>
    <subcellularLocation>
        <location evidence="7">Cell projection</location>
        <location evidence="7">Neuron projection</location>
    </subcellularLocation>
    <text>Localizes at neurite tips (PubMed:14741102).</text>
</comment>
<comment type="PTM">
    <text evidence="3 7">Phosphorylation by MARK1, MARK2 and PKA regulates its ability to bind microtubules (PubMed:14741102). Phosphorylation at Ser-265 and Ser-297 seems to occur only in neonatal brain, the levels falling precipitously by postnatal day 21 (By similarity).</text>
</comment>
<comment type="PTM">
    <text evidence="3">Ubiquitinated by MDM2, leading to its degradation by the proteasome. Ubiquitinated by MDM2 and subsequent degradation leads to reduce the dendritic spine density of olfactory bulb granule cells.</text>
</comment>
<keyword id="KW-0966">Cell projection</keyword>
<keyword id="KW-0963">Cytoplasm</keyword>
<keyword id="KW-0217">Developmental protein</keyword>
<keyword id="KW-0221">Differentiation</keyword>
<keyword id="KW-0493">Microtubule</keyword>
<keyword id="KW-0524">Neurogenesis</keyword>
<keyword id="KW-0597">Phosphoprotein</keyword>
<keyword id="KW-1185">Reference proteome</keyword>
<keyword id="KW-0677">Repeat</keyword>
<keyword id="KW-0832">Ubl conjugation</keyword>